<reference key="1">
    <citation type="journal article" date="2005" name="BMC Genomics">
        <title>Bacterial genome adaptation to niches: divergence of the potential virulence genes in three Burkholderia species of different survival strategies.</title>
        <authorList>
            <person name="Kim H.S."/>
            <person name="Schell M.A."/>
            <person name="Yu Y."/>
            <person name="Ulrich R.L."/>
            <person name="Sarria S.H."/>
            <person name="Nierman W.C."/>
            <person name="DeShazer D."/>
        </authorList>
    </citation>
    <scope>NUCLEOTIDE SEQUENCE [LARGE SCALE GENOMIC DNA]</scope>
    <source>
        <strain>ATCC 700388 / DSM 13276 / CCUG 48851 / CIP 106301 / E264</strain>
    </source>
</reference>
<proteinExistence type="inferred from homology"/>
<evidence type="ECO:0000255" key="1">
    <source>
        <dbReference type="HAMAP-Rule" id="MF_00454"/>
    </source>
</evidence>
<dbReference type="EMBL" id="CP000086">
    <property type="protein sequence ID" value="ABC37473.1"/>
    <property type="molecule type" value="Genomic_DNA"/>
</dbReference>
<dbReference type="RefSeq" id="WP_009889642.1">
    <property type="nucleotide sequence ID" value="NZ_CP008785.1"/>
</dbReference>
<dbReference type="SMR" id="Q2SYD4"/>
<dbReference type="GeneID" id="45121260"/>
<dbReference type="KEGG" id="bte:BTH_I1520"/>
<dbReference type="HOGENOM" id="CLU_114342_3_3_4"/>
<dbReference type="Proteomes" id="UP000001930">
    <property type="component" value="Chromosome I"/>
</dbReference>
<dbReference type="GO" id="GO:0005886">
    <property type="term" value="C:plasma membrane"/>
    <property type="evidence" value="ECO:0007669"/>
    <property type="project" value="UniProtKB-SubCell"/>
</dbReference>
<dbReference type="GO" id="GO:0062054">
    <property type="term" value="F:fluoride channel activity"/>
    <property type="evidence" value="ECO:0007669"/>
    <property type="project" value="UniProtKB-UniRule"/>
</dbReference>
<dbReference type="GO" id="GO:0046872">
    <property type="term" value="F:metal ion binding"/>
    <property type="evidence" value="ECO:0007669"/>
    <property type="project" value="UniProtKB-KW"/>
</dbReference>
<dbReference type="GO" id="GO:0140114">
    <property type="term" value="P:cellular detoxification of fluoride"/>
    <property type="evidence" value="ECO:0007669"/>
    <property type="project" value="UniProtKB-UniRule"/>
</dbReference>
<dbReference type="HAMAP" id="MF_00454">
    <property type="entry name" value="FluC"/>
    <property type="match status" value="1"/>
</dbReference>
<dbReference type="InterPro" id="IPR003691">
    <property type="entry name" value="FluC"/>
</dbReference>
<dbReference type="NCBIfam" id="TIGR00494">
    <property type="entry name" value="crcB"/>
    <property type="match status" value="1"/>
</dbReference>
<dbReference type="NCBIfam" id="NF010792">
    <property type="entry name" value="PRK14196.1"/>
    <property type="match status" value="1"/>
</dbReference>
<dbReference type="PANTHER" id="PTHR28259">
    <property type="entry name" value="FLUORIDE EXPORT PROTEIN 1-RELATED"/>
    <property type="match status" value="1"/>
</dbReference>
<dbReference type="PANTHER" id="PTHR28259:SF1">
    <property type="entry name" value="FLUORIDE EXPORT PROTEIN 1-RELATED"/>
    <property type="match status" value="1"/>
</dbReference>
<dbReference type="Pfam" id="PF02537">
    <property type="entry name" value="CRCB"/>
    <property type="match status" value="1"/>
</dbReference>
<gene>
    <name evidence="1" type="primary">fluC</name>
    <name evidence="1" type="synonym">crcB</name>
    <name type="ordered locus">BTH_I1520</name>
</gene>
<name>FLUC_BURTA</name>
<comment type="function">
    <text evidence="1">Fluoride-specific ion channel. Important for reducing fluoride concentration in the cell, thus reducing its toxicity.</text>
</comment>
<comment type="catalytic activity">
    <reaction evidence="1">
        <text>fluoride(in) = fluoride(out)</text>
        <dbReference type="Rhea" id="RHEA:76159"/>
        <dbReference type="ChEBI" id="CHEBI:17051"/>
    </reaction>
    <physiologicalReaction direction="left-to-right" evidence="1">
        <dbReference type="Rhea" id="RHEA:76160"/>
    </physiologicalReaction>
</comment>
<comment type="activity regulation">
    <text evidence="1">Na(+) is not transported, but it plays an essential structural role and its presence is essential for fluoride channel function.</text>
</comment>
<comment type="subcellular location">
    <subcellularLocation>
        <location evidence="1">Cell inner membrane</location>
        <topology evidence="1">Multi-pass membrane protein</topology>
    </subcellularLocation>
</comment>
<comment type="similarity">
    <text evidence="1">Belongs to the fluoride channel Fluc/FEX (TC 1.A.43) family.</text>
</comment>
<accession>Q2SYD4</accession>
<organism>
    <name type="scientific">Burkholderia thailandensis (strain ATCC 700388 / DSM 13276 / CCUG 48851 / CIP 106301 / E264)</name>
    <dbReference type="NCBI Taxonomy" id="271848"/>
    <lineage>
        <taxon>Bacteria</taxon>
        <taxon>Pseudomonadati</taxon>
        <taxon>Pseudomonadota</taxon>
        <taxon>Betaproteobacteria</taxon>
        <taxon>Burkholderiales</taxon>
        <taxon>Burkholderiaceae</taxon>
        <taxon>Burkholderia</taxon>
        <taxon>pseudomallei group</taxon>
    </lineage>
</organism>
<sequence>MFYSIVAIFVGAGLGALLRWFLSIGLNALLPEVPLGTLVSNLIGGYLIGIAVVAFATRAGLPPEWRLFVITGFMGGLTTFSTYSVEVMTHATQGEFGWALAVAALHLIGSFTLTGLGMWTARAWLAPA</sequence>
<protein>
    <recommendedName>
        <fullName evidence="1">Fluoride-specific ion channel FluC</fullName>
    </recommendedName>
</protein>
<keyword id="KW-0997">Cell inner membrane</keyword>
<keyword id="KW-1003">Cell membrane</keyword>
<keyword id="KW-0407">Ion channel</keyword>
<keyword id="KW-0406">Ion transport</keyword>
<keyword id="KW-0472">Membrane</keyword>
<keyword id="KW-0479">Metal-binding</keyword>
<keyword id="KW-0915">Sodium</keyword>
<keyword id="KW-0812">Transmembrane</keyword>
<keyword id="KW-1133">Transmembrane helix</keyword>
<keyword id="KW-0813">Transport</keyword>
<feature type="chain" id="PRO_0000252863" description="Fluoride-specific ion channel FluC">
    <location>
        <begin position="1"/>
        <end position="128"/>
    </location>
</feature>
<feature type="transmembrane region" description="Helical" evidence="1">
    <location>
        <begin position="5"/>
        <end position="25"/>
    </location>
</feature>
<feature type="transmembrane region" description="Helical" evidence="1">
    <location>
        <begin position="35"/>
        <end position="55"/>
    </location>
</feature>
<feature type="transmembrane region" description="Helical" evidence="1">
    <location>
        <begin position="67"/>
        <end position="87"/>
    </location>
</feature>
<feature type="transmembrane region" description="Helical" evidence="1">
    <location>
        <begin position="96"/>
        <end position="116"/>
    </location>
</feature>
<feature type="binding site" evidence="1">
    <location>
        <position position="75"/>
    </location>
    <ligand>
        <name>Na(+)</name>
        <dbReference type="ChEBI" id="CHEBI:29101"/>
        <note>structural</note>
    </ligand>
</feature>
<feature type="binding site" evidence="1">
    <location>
        <position position="78"/>
    </location>
    <ligand>
        <name>Na(+)</name>
        <dbReference type="ChEBI" id="CHEBI:29101"/>
        <note>structural</note>
    </ligand>
</feature>